<feature type="chain" id="PRO_1000048493" description="DNA polymerase III PolC-type">
    <location>
        <begin position="1"/>
        <end position="1464"/>
    </location>
</feature>
<feature type="domain" description="Exonuclease">
    <location>
        <begin position="426"/>
        <end position="582"/>
    </location>
</feature>
<accession>Q5M1Y0</accession>
<proteinExistence type="inferred from homology"/>
<protein>
    <recommendedName>
        <fullName evidence="1">DNA polymerase III PolC-type</fullName>
        <shortName evidence="1">PolIII</shortName>
        <ecNumber evidence="1">2.7.7.7</ecNumber>
    </recommendedName>
</protein>
<comment type="function">
    <text evidence="1">Required for replicative DNA synthesis. This DNA polymerase also exhibits 3' to 5' exonuclease activity.</text>
</comment>
<comment type="catalytic activity">
    <reaction evidence="1">
        <text>DNA(n) + a 2'-deoxyribonucleoside 5'-triphosphate = DNA(n+1) + diphosphate</text>
        <dbReference type="Rhea" id="RHEA:22508"/>
        <dbReference type="Rhea" id="RHEA-COMP:17339"/>
        <dbReference type="Rhea" id="RHEA-COMP:17340"/>
        <dbReference type="ChEBI" id="CHEBI:33019"/>
        <dbReference type="ChEBI" id="CHEBI:61560"/>
        <dbReference type="ChEBI" id="CHEBI:173112"/>
        <dbReference type="EC" id="2.7.7.7"/>
    </reaction>
</comment>
<comment type="subcellular location">
    <subcellularLocation>
        <location evidence="1">Cytoplasm</location>
    </subcellularLocation>
</comment>
<comment type="similarity">
    <text evidence="1">Belongs to the DNA polymerase type-C family. PolC subfamily.</text>
</comment>
<sequence>MSDKFKLLLKQIHFPQHEEAYNEIKSGSIESVKLFKSKRQWFFVFSFRNLLSYETFTLFDNLLHSSFDSLGAKVSYMINVEDISCDQSLLEAYFSYALDILKSSHFSIYSLFSNLGIEISNNSISVKAPAHILRENLHERFIALIADVLSNVGLSNVSISVLEDKEASSSLEEAYETNKISLQEEAESQARQALQSIVQSSPVPPPQKHQAQNFAEKQSQRVASFDKAEITPMIEVNSEENRIVFEGYIFDVEQRETKTGRIIINFKVTDYTSSFAMQRWVKDSEELVKFGMIKKGNWVRVRGRIENNPFTHSLTMNVQDIKEISHTPRKDLMPEGQKRVEFHAHTNMSTMDAIPTVEELIDTAAFWGHPAVAITDHANVQSFPHGYHKAKKAGIKAIFGLEANLVEDKVPIVYNSENLELKEATYVVFDVETTGLSAVHNDLIQIAASKMHKGNIVEQFDEFIDPGYPLSAFTTELTGITDNHVKGAKPLVQVLQEFQEFCKGAVLVAHNATFDVGFMNANYERHQLPTISQPVIDTLEFARNLYPEYKRHGLGPLTKRFGVALDHHHMANYDAEATGRLLFIFIKDVFEKHGLTNLEQLNTELVSDDSYKKSRVKHATLYVQNQTGLKNIFKLVSLSNVSYFEGVARIPRKVLDEYREGIIVGSACADGEVFDTLLSHGIDKAVEVAKYYDFIEVMPPAIYAPLIAKDLIKDEGAIEQLIRDLIEVANRLDKPVLATGNVHYINPEDAIYREIIVRALGQGAMINRPIGKEENAQPAPLPEAHFRTTNEMLDEFAFLGKDLAYEIVVANTQAMANQIEEVEVVKKDLYTPYIDRAEEQVAEMTYAKAFELYGNPLPDIIDLRIEKELSSILGNGFAVIYLASQMLVNRSNERGYLVGSRGSVGSSFVATMIGITEVNPMPPHYLCPKCQHSEFITDGSYGSGFDLPDKECSECGTEYKKDGQDIPFETFLGFDGDKVPDIDLNFSGDDQPSAHLDVRDIFGEQYAFRAGTVGTVADRTAYGFVKGYERDYNKFYRDAEVDRLAMGVAGVKRNTGQHPGGIVVIPNYMDVYDFTPVQYPADDVTAAWQTTHFNFHDIDENVLKLDILGHDDPTMIRKLQDLSGIDPKDIRADDPDVMKLFSGTEVLGVTPEQIGTSTGVLGIPEFGTNFVRGMVEETHPTTFAELLQLSGLSHGTDVWLGNAQDLIKEGIATLKTVIGCRDDIMVYLMHAGLDPKMAFTIMERVRKGMWLKISEEERNGYIQAMRENNVPDWYIESCGKIKYMFPKAHAAAYVMMALRVAYFKVHHPIYYYCAYFSIRAKAFELKTMSAGLDAVKARMEDIKEKRQRNEATNLENDLFTTLEIVNEMLERGFTFGQLDLYKSQATEFLIEGDTLIPPFIALEGLGENVAKQLVAAREEGEFLSKTELRKRGGLSSTLVERLDEMGILGNMPEDNQLSLFDDFF</sequence>
<evidence type="ECO:0000255" key="1">
    <source>
        <dbReference type="HAMAP-Rule" id="MF_00356"/>
    </source>
</evidence>
<name>DPO3_STRT1</name>
<keyword id="KW-0963">Cytoplasm</keyword>
<keyword id="KW-0235">DNA replication</keyword>
<keyword id="KW-0239">DNA-directed DNA polymerase</keyword>
<keyword id="KW-0269">Exonuclease</keyword>
<keyword id="KW-0378">Hydrolase</keyword>
<keyword id="KW-0540">Nuclease</keyword>
<keyword id="KW-0548">Nucleotidyltransferase</keyword>
<keyword id="KW-0808">Transferase</keyword>
<gene>
    <name evidence="1" type="primary">polC</name>
    <name type="ordered locus">str0062</name>
</gene>
<dbReference type="EC" id="2.7.7.7" evidence="1"/>
<dbReference type="EMBL" id="CP000024">
    <property type="protein sequence ID" value="AAV61679.1"/>
    <property type="molecule type" value="Genomic_DNA"/>
</dbReference>
<dbReference type="RefSeq" id="WP_011226747.1">
    <property type="nucleotide sequence ID" value="NC_006449.1"/>
</dbReference>
<dbReference type="SMR" id="Q5M1Y0"/>
<dbReference type="GeneID" id="66897995"/>
<dbReference type="KEGG" id="stc:str0062"/>
<dbReference type="HOGENOM" id="CLU_003297_2_0_9"/>
<dbReference type="GO" id="GO:0005737">
    <property type="term" value="C:cytoplasm"/>
    <property type="evidence" value="ECO:0007669"/>
    <property type="project" value="UniProtKB-SubCell"/>
</dbReference>
<dbReference type="GO" id="GO:0008408">
    <property type="term" value="F:3'-5' exonuclease activity"/>
    <property type="evidence" value="ECO:0007669"/>
    <property type="project" value="UniProtKB-UniRule"/>
</dbReference>
<dbReference type="GO" id="GO:0003677">
    <property type="term" value="F:DNA binding"/>
    <property type="evidence" value="ECO:0007669"/>
    <property type="project" value="UniProtKB-UniRule"/>
</dbReference>
<dbReference type="GO" id="GO:0003887">
    <property type="term" value="F:DNA-directed DNA polymerase activity"/>
    <property type="evidence" value="ECO:0007669"/>
    <property type="project" value="UniProtKB-UniRule"/>
</dbReference>
<dbReference type="GO" id="GO:0006261">
    <property type="term" value="P:DNA-templated DNA replication"/>
    <property type="evidence" value="ECO:0007669"/>
    <property type="project" value="UniProtKB-UniRule"/>
</dbReference>
<dbReference type="CDD" id="cd06127">
    <property type="entry name" value="DEDDh"/>
    <property type="match status" value="1"/>
</dbReference>
<dbReference type="CDD" id="cd07435">
    <property type="entry name" value="PHP_PolIIIA_POLC"/>
    <property type="match status" value="1"/>
</dbReference>
<dbReference type="CDD" id="cd04484">
    <property type="entry name" value="polC_OBF"/>
    <property type="match status" value="1"/>
</dbReference>
<dbReference type="FunFam" id="3.30.420.10:FF:000045">
    <property type="entry name" value="3'-5' exonuclease DinG"/>
    <property type="match status" value="1"/>
</dbReference>
<dbReference type="Gene3D" id="1.10.150.870">
    <property type="match status" value="1"/>
</dbReference>
<dbReference type="Gene3D" id="3.30.1900.20">
    <property type="match status" value="1"/>
</dbReference>
<dbReference type="Gene3D" id="6.10.140.1510">
    <property type="match status" value="1"/>
</dbReference>
<dbReference type="Gene3D" id="3.20.20.140">
    <property type="entry name" value="Metal-dependent hydrolases"/>
    <property type="match status" value="2"/>
</dbReference>
<dbReference type="Gene3D" id="2.40.50.140">
    <property type="entry name" value="Nucleic acid-binding proteins"/>
    <property type="match status" value="1"/>
</dbReference>
<dbReference type="Gene3D" id="1.10.150.700">
    <property type="entry name" value="PolC, middle finger domain"/>
    <property type="match status" value="1"/>
</dbReference>
<dbReference type="Gene3D" id="3.30.420.10">
    <property type="entry name" value="Ribonuclease H-like superfamily/Ribonuclease H"/>
    <property type="match status" value="1"/>
</dbReference>
<dbReference type="HAMAP" id="MF_00356">
    <property type="entry name" value="DNApol_PolC"/>
    <property type="match status" value="1"/>
</dbReference>
<dbReference type="InterPro" id="IPR011708">
    <property type="entry name" value="DNA_pol3_alpha_NTPase_dom"/>
</dbReference>
<dbReference type="InterPro" id="IPR040982">
    <property type="entry name" value="DNA_pol3_finger"/>
</dbReference>
<dbReference type="InterPro" id="IPR024754">
    <property type="entry name" value="DNA_PolC-like_N_II"/>
</dbReference>
<dbReference type="InterPro" id="IPR028112">
    <property type="entry name" value="DNA_PolC-type_N_I"/>
</dbReference>
<dbReference type="InterPro" id="IPR004805">
    <property type="entry name" value="DnaE2/DnaE/PolC"/>
</dbReference>
<dbReference type="InterPro" id="IPR029460">
    <property type="entry name" value="DNAPol_HHH"/>
</dbReference>
<dbReference type="InterPro" id="IPR006054">
    <property type="entry name" value="DnaQ"/>
</dbReference>
<dbReference type="InterPro" id="IPR013520">
    <property type="entry name" value="Exonuclease_RNaseT/DNA_pol3"/>
</dbReference>
<dbReference type="InterPro" id="IPR012340">
    <property type="entry name" value="NA-bd_OB-fold"/>
</dbReference>
<dbReference type="InterPro" id="IPR004013">
    <property type="entry name" value="PHP_dom"/>
</dbReference>
<dbReference type="InterPro" id="IPR003141">
    <property type="entry name" value="Pol/His_phosphatase_N"/>
</dbReference>
<dbReference type="InterPro" id="IPR006308">
    <property type="entry name" value="Pol_III_a_PolC-type_gram_pos"/>
</dbReference>
<dbReference type="InterPro" id="IPR044923">
    <property type="entry name" value="PolC_middle_finger_sf"/>
</dbReference>
<dbReference type="InterPro" id="IPR012337">
    <property type="entry name" value="RNaseH-like_sf"/>
</dbReference>
<dbReference type="InterPro" id="IPR036397">
    <property type="entry name" value="RNaseH_sf"/>
</dbReference>
<dbReference type="NCBIfam" id="TIGR00573">
    <property type="entry name" value="dnaq"/>
    <property type="match status" value="1"/>
</dbReference>
<dbReference type="NCBIfam" id="TIGR01405">
    <property type="entry name" value="polC_Gram_pos"/>
    <property type="match status" value="1"/>
</dbReference>
<dbReference type="NCBIfam" id="NF001688">
    <property type="entry name" value="PRK00448.1"/>
    <property type="match status" value="1"/>
</dbReference>
<dbReference type="PANTHER" id="PTHR32294:SF5">
    <property type="entry name" value="DNA POLYMERASE III POLC-TYPE"/>
    <property type="match status" value="1"/>
</dbReference>
<dbReference type="PANTHER" id="PTHR32294">
    <property type="entry name" value="DNA POLYMERASE III SUBUNIT ALPHA"/>
    <property type="match status" value="1"/>
</dbReference>
<dbReference type="Pfam" id="PF14480">
    <property type="entry name" value="DNA_pol3_a_NI"/>
    <property type="match status" value="1"/>
</dbReference>
<dbReference type="Pfam" id="PF11490">
    <property type="entry name" value="DNA_pol3_a_NII"/>
    <property type="match status" value="1"/>
</dbReference>
<dbReference type="Pfam" id="PF07733">
    <property type="entry name" value="DNA_pol3_alpha"/>
    <property type="match status" value="1"/>
</dbReference>
<dbReference type="Pfam" id="PF17657">
    <property type="entry name" value="DNA_pol3_finger"/>
    <property type="match status" value="1"/>
</dbReference>
<dbReference type="Pfam" id="PF14579">
    <property type="entry name" value="HHH_6"/>
    <property type="match status" value="1"/>
</dbReference>
<dbReference type="Pfam" id="PF02811">
    <property type="entry name" value="PHP"/>
    <property type="match status" value="1"/>
</dbReference>
<dbReference type="Pfam" id="PF00929">
    <property type="entry name" value="RNase_T"/>
    <property type="match status" value="1"/>
</dbReference>
<dbReference type="SMART" id="SM00479">
    <property type="entry name" value="EXOIII"/>
    <property type="match status" value="1"/>
</dbReference>
<dbReference type="SMART" id="SM00481">
    <property type="entry name" value="POLIIIAc"/>
    <property type="match status" value="1"/>
</dbReference>
<dbReference type="SUPFAM" id="SSF50249">
    <property type="entry name" value="Nucleic acid-binding proteins"/>
    <property type="match status" value="1"/>
</dbReference>
<dbReference type="SUPFAM" id="SSF53098">
    <property type="entry name" value="Ribonuclease H-like"/>
    <property type="match status" value="1"/>
</dbReference>
<organism>
    <name type="scientific">Streptococcus thermophilus (strain CNRZ 1066)</name>
    <dbReference type="NCBI Taxonomy" id="299768"/>
    <lineage>
        <taxon>Bacteria</taxon>
        <taxon>Bacillati</taxon>
        <taxon>Bacillota</taxon>
        <taxon>Bacilli</taxon>
        <taxon>Lactobacillales</taxon>
        <taxon>Streptococcaceae</taxon>
        <taxon>Streptococcus</taxon>
    </lineage>
</organism>
<reference key="1">
    <citation type="journal article" date="2004" name="Nat. Biotechnol.">
        <title>Complete sequence and comparative genome analysis of the dairy bacterium Streptococcus thermophilus.</title>
        <authorList>
            <person name="Bolotin A."/>
            <person name="Quinquis B."/>
            <person name="Renault P."/>
            <person name="Sorokin A."/>
            <person name="Ehrlich S.D."/>
            <person name="Kulakauskas S."/>
            <person name="Lapidus A."/>
            <person name="Goltsman E."/>
            <person name="Mazur M."/>
            <person name="Pusch G.D."/>
            <person name="Fonstein M."/>
            <person name="Overbeek R."/>
            <person name="Kyprides N."/>
            <person name="Purnelle B."/>
            <person name="Prozzi D."/>
            <person name="Ngui K."/>
            <person name="Masuy D."/>
            <person name="Hancy F."/>
            <person name="Burteau S."/>
            <person name="Boutry M."/>
            <person name="Delcour J."/>
            <person name="Goffeau A."/>
            <person name="Hols P."/>
        </authorList>
    </citation>
    <scope>NUCLEOTIDE SEQUENCE [LARGE SCALE GENOMIC DNA]</scope>
    <source>
        <strain>CNRZ 1066</strain>
    </source>
</reference>